<gene>
    <name evidence="13" type="primary">B9d1</name>
    <name evidence="13" type="ORF">CG14870</name>
</gene>
<keyword id="KW-0966">Cell projection</keyword>
<keyword id="KW-0970">Cilium biogenesis/degradation</keyword>
<keyword id="KW-0963">Cytoplasm</keyword>
<keyword id="KW-0206">Cytoskeleton</keyword>
<keyword id="KW-1185">Reference proteome</keyword>
<name>B9D1_DROME</name>
<accession>Q9VF59</accession>
<feature type="chain" id="PRO_0000445800" description="B9 domain-containing protein 1" evidence="9">
    <location>
        <begin position="1"/>
        <end position="241"/>
    </location>
</feature>
<feature type="domain" description="C2 B9-type" evidence="1">
    <location>
        <begin position="53"/>
        <end position="197"/>
    </location>
</feature>
<feature type="region of interest" description="Disordered" evidence="2">
    <location>
        <begin position="1"/>
        <end position="42"/>
    </location>
</feature>
<feature type="compositionally biased region" description="Basic residues" evidence="2">
    <location>
        <begin position="20"/>
        <end position="34"/>
    </location>
</feature>
<evidence type="ECO:0000255" key="1">
    <source>
        <dbReference type="PROSITE-ProRule" id="PRU00713"/>
    </source>
</evidence>
<evidence type="ECO:0000256" key="2">
    <source>
        <dbReference type="SAM" id="MobiDB-lite"/>
    </source>
</evidence>
<evidence type="ECO:0000269" key="3">
    <source>
    </source>
</evidence>
<evidence type="ECO:0000269" key="4">
    <source>
    </source>
</evidence>
<evidence type="ECO:0000269" key="5">
    <source>
    </source>
</evidence>
<evidence type="ECO:0000269" key="6">
    <source>
    </source>
</evidence>
<evidence type="ECO:0000269" key="7">
    <source>
    </source>
</evidence>
<evidence type="ECO:0000303" key="8">
    <source>
    </source>
</evidence>
<evidence type="ECO:0000305" key="9"/>
<evidence type="ECO:0000305" key="10">
    <source>
    </source>
</evidence>
<evidence type="ECO:0000305" key="11">
    <source>
    </source>
</evidence>
<evidence type="ECO:0000312" key="12">
    <source>
        <dbReference type="EMBL" id="ACD81742.1"/>
    </source>
</evidence>
<evidence type="ECO:0000312" key="13">
    <source>
        <dbReference type="FlyBase" id="FBgn0038342"/>
    </source>
</evidence>
<evidence type="ECO:0000312" key="14">
    <source>
        <dbReference type="Proteomes" id="UP000000803"/>
    </source>
</evidence>
<protein>
    <recommendedName>
        <fullName evidence="13">B9 domain-containing protein 1</fullName>
    </recommendedName>
    <alternativeName>
        <fullName evidence="8">MKS1-related protein 1</fullName>
    </alternativeName>
</protein>
<reference evidence="14" key="1">
    <citation type="journal article" date="2000" name="Science">
        <title>The genome sequence of Drosophila melanogaster.</title>
        <authorList>
            <person name="Adams M.D."/>
            <person name="Celniker S.E."/>
            <person name="Holt R.A."/>
            <person name="Evans C.A."/>
            <person name="Gocayne J.D."/>
            <person name="Amanatides P.G."/>
            <person name="Scherer S.E."/>
            <person name="Li P.W."/>
            <person name="Hoskins R.A."/>
            <person name="Galle R.F."/>
            <person name="George R.A."/>
            <person name="Lewis S.E."/>
            <person name="Richards S."/>
            <person name="Ashburner M."/>
            <person name="Henderson S.N."/>
            <person name="Sutton G.G."/>
            <person name="Wortman J.R."/>
            <person name="Yandell M.D."/>
            <person name="Zhang Q."/>
            <person name="Chen L.X."/>
            <person name="Brandon R.C."/>
            <person name="Rogers Y.-H.C."/>
            <person name="Blazej R.G."/>
            <person name="Champe M."/>
            <person name="Pfeiffer B.D."/>
            <person name="Wan K.H."/>
            <person name="Doyle C."/>
            <person name="Baxter E.G."/>
            <person name="Helt G."/>
            <person name="Nelson C.R."/>
            <person name="Miklos G.L.G."/>
            <person name="Abril J.F."/>
            <person name="Agbayani A."/>
            <person name="An H.-J."/>
            <person name="Andrews-Pfannkoch C."/>
            <person name="Baldwin D."/>
            <person name="Ballew R.M."/>
            <person name="Basu A."/>
            <person name="Baxendale J."/>
            <person name="Bayraktaroglu L."/>
            <person name="Beasley E.M."/>
            <person name="Beeson K.Y."/>
            <person name="Benos P.V."/>
            <person name="Berman B.P."/>
            <person name="Bhandari D."/>
            <person name="Bolshakov S."/>
            <person name="Borkova D."/>
            <person name="Botchan M.R."/>
            <person name="Bouck J."/>
            <person name="Brokstein P."/>
            <person name="Brottier P."/>
            <person name="Burtis K.C."/>
            <person name="Busam D.A."/>
            <person name="Butler H."/>
            <person name="Cadieu E."/>
            <person name="Center A."/>
            <person name="Chandra I."/>
            <person name="Cherry J.M."/>
            <person name="Cawley S."/>
            <person name="Dahlke C."/>
            <person name="Davenport L.B."/>
            <person name="Davies P."/>
            <person name="de Pablos B."/>
            <person name="Delcher A."/>
            <person name="Deng Z."/>
            <person name="Mays A.D."/>
            <person name="Dew I."/>
            <person name="Dietz S.M."/>
            <person name="Dodson K."/>
            <person name="Doup L.E."/>
            <person name="Downes M."/>
            <person name="Dugan-Rocha S."/>
            <person name="Dunkov B.C."/>
            <person name="Dunn P."/>
            <person name="Durbin K.J."/>
            <person name="Evangelista C.C."/>
            <person name="Ferraz C."/>
            <person name="Ferriera S."/>
            <person name="Fleischmann W."/>
            <person name="Fosler C."/>
            <person name="Gabrielian A.E."/>
            <person name="Garg N.S."/>
            <person name="Gelbart W.M."/>
            <person name="Glasser K."/>
            <person name="Glodek A."/>
            <person name="Gong F."/>
            <person name="Gorrell J.H."/>
            <person name="Gu Z."/>
            <person name="Guan P."/>
            <person name="Harris M."/>
            <person name="Harris N.L."/>
            <person name="Harvey D.A."/>
            <person name="Heiman T.J."/>
            <person name="Hernandez J.R."/>
            <person name="Houck J."/>
            <person name="Hostin D."/>
            <person name="Houston K.A."/>
            <person name="Howland T.J."/>
            <person name="Wei M.-H."/>
            <person name="Ibegwam C."/>
            <person name="Jalali M."/>
            <person name="Kalush F."/>
            <person name="Karpen G.H."/>
            <person name="Ke Z."/>
            <person name="Kennison J.A."/>
            <person name="Ketchum K.A."/>
            <person name="Kimmel B.E."/>
            <person name="Kodira C.D."/>
            <person name="Kraft C.L."/>
            <person name="Kravitz S."/>
            <person name="Kulp D."/>
            <person name="Lai Z."/>
            <person name="Lasko P."/>
            <person name="Lei Y."/>
            <person name="Levitsky A.A."/>
            <person name="Li J.H."/>
            <person name="Li Z."/>
            <person name="Liang Y."/>
            <person name="Lin X."/>
            <person name="Liu X."/>
            <person name="Mattei B."/>
            <person name="McIntosh T.C."/>
            <person name="McLeod M.P."/>
            <person name="McPherson D."/>
            <person name="Merkulov G."/>
            <person name="Milshina N.V."/>
            <person name="Mobarry C."/>
            <person name="Morris J."/>
            <person name="Moshrefi A."/>
            <person name="Mount S.M."/>
            <person name="Moy M."/>
            <person name="Murphy B."/>
            <person name="Murphy L."/>
            <person name="Muzny D.M."/>
            <person name="Nelson D.L."/>
            <person name="Nelson D.R."/>
            <person name="Nelson K.A."/>
            <person name="Nixon K."/>
            <person name="Nusskern D.R."/>
            <person name="Pacleb J.M."/>
            <person name="Palazzolo M."/>
            <person name="Pittman G.S."/>
            <person name="Pan S."/>
            <person name="Pollard J."/>
            <person name="Puri V."/>
            <person name="Reese M.G."/>
            <person name="Reinert K."/>
            <person name="Remington K."/>
            <person name="Saunders R.D.C."/>
            <person name="Scheeler F."/>
            <person name="Shen H."/>
            <person name="Shue B.C."/>
            <person name="Siden-Kiamos I."/>
            <person name="Simpson M."/>
            <person name="Skupski M.P."/>
            <person name="Smith T.J."/>
            <person name="Spier E."/>
            <person name="Spradling A.C."/>
            <person name="Stapleton M."/>
            <person name="Strong R."/>
            <person name="Sun E."/>
            <person name="Svirskas R."/>
            <person name="Tector C."/>
            <person name="Turner R."/>
            <person name="Venter E."/>
            <person name="Wang A.H."/>
            <person name="Wang X."/>
            <person name="Wang Z.-Y."/>
            <person name="Wassarman D.A."/>
            <person name="Weinstock G.M."/>
            <person name="Weissenbach J."/>
            <person name="Williams S.M."/>
            <person name="Woodage T."/>
            <person name="Worley K.C."/>
            <person name="Wu D."/>
            <person name="Yang S."/>
            <person name="Yao Q.A."/>
            <person name="Ye J."/>
            <person name="Yeh R.-F."/>
            <person name="Zaveri J.S."/>
            <person name="Zhan M."/>
            <person name="Zhang G."/>
            <person name="Zhao Q."/>
            <person name="Zheng L."/>
            <person name="Zheng X.H."/>
            <person name="Zhong F.N."/>
            <person name="Zhong W."/>
            <person name="Zhou X."/>
            <person name="Zhu S.C."/>
            <person name="Zhu X."/>
            <person name="Smith H.O."/>
            <person name="Gibbs R.A."/>
            <person name="Myers E.W."/>
            <person name="Rubin G.M."/>
            <person name="Venter J.C."/>
        </authorList>
    </citation>
    <scope>NUCLEOTIDE SEQUENCE [LARGE SCALE GENOMIC DNA]</scope>
    <source>
        <strain evidence="14">Berkeley</strain>
    </source>
</reference>
<reference evidence="14" key="2">
    <citation type="journal article" date="2002" name="Genome Biol.">
        <title>Annotation of the Drosophila melanogaster euchromatic genome: a systematic review.</title>
        <authorList>
            <person name="Misra S."/>
            <person name="Crosby M.A."/>
            <person name="Mungall C.J."/>
            <person name="Matthews B.B."/>
            <person name="Campbell K.S."/>
            <person name="Hradecky P."/>
            <person name="Huang Y."/>
            <person name="Kaminker J.S."/>
            <person name="Millburn G.H."/>
            <person name="Prochnik S.E."/>
            <person name="Smith C.D."/>
            <person name="Tupy J.L."/>
            <person name="Whitfield E.J."/>
            <person name="Bayraktaroglu L."/>
            <person name="Berman B.P."/>
            <person name="Bettencourt B.R."/>
            <person name="Celniker S.E."/>
            <person name="de Grey A.D.N.J."/>
            <person name="Drysdale R.A."/>
            <person name="Harris N.L."/>
            <person name="Richter J."/>
            <person name="Russo S."/>
            <person name="Schroeder A.J."/>
            <person name="Shu S.Q."/>
            <person name="Stapleton M."/>
            <person name="Yamada C."/>
            <person name="Ashburner M."/>
            <person name="Gelbart W.M."/>
            <person name="Rubin G.M."/>
            <person name="Lewis S.E."/>
        </authorList>
    </citation>
    <scope>GENOME REANNOTATION</scope>
    <source>
        <strain evidence="14">Berkeley</strain>
    </source>
</reference>
<reference evidence="12" key="3">
    <citation type="submission" date="2008-05" db="EMBL/GenBank/DDBJ databases">
        <authorList>
            <person name="Carlson J."/>
            <person name="Booth B."/>
            <person name="Frise E."/>
            <person name="Park S."/>
            <person name="Wan K."/>
            <person name="Yu C."/>
            <person name="Celniker S."/>
        </authorList>
    </citation>
    <scope>NUCLEOTIDE SEQUENCE [LARGE SCALE MRNA]</scope>
</reference>
<reference evidence="9" key="4">
    <citation type="journal article" date="2012" name="J. Cell Biol.">
        <title>Drosophila chibby is required for basal body formation and ciliogenesis but not for Wg signaling.</title>
        <authorList>
            <person name="Enjolras C."/>
            <person name="Thomas J."/>
            <person name="Chhin B."/>
            <person name="Cortier E."/>
            <person name="Duteyrat J.L."/>
            <person name="Soulavie F."/>
            <person name="Kernan M.J."/>
            <person name="Laurencon A."/>
            <person name="Durand B."/>
        </authorList>
    </citation>
    <scope>SUBCELLULAR LOCATION</scope>
    <scope>TISSUE SPECIFICITY</scope>
</reference>
<reference evidence="9" key="5">
    <citation type="journal article" date="2014" name="Curr. Biol.">
        <title>A migrating ciliary gate compartmentalizes the site of axoneme assembly in Drosophila spermatids.</title>
        <authorList>
            <person name="Basiri M.L."/>
            <person name="Ha A."/>
            <person name="Chadha A."/>
            <person name="Clark N.M."/>
            <person name="Polyanovsky A."/>
            <person name="Cook B."/>
            <person name="Avidor-Reiss T."/>
        </authorList>
    </citation>
    <scope>SUBCELLULAR LOCATION</scope>
    <scope>TISSUE SPECIFICITY</scope>
</reference>
<reference evidence="9" key="6">
    <citation type="journal article" date="2016" name="J. Cell Biol.">
        <title>Transition zone assembly and its contribution to axoneme formation in Drosophila male germ cells.</title>
        <authorList>
            <person name="Vieillard J."/>
            <person name="Paschaki M."/>
            <person name="Duteyrat J.L."/>
            <person name="Augiere C."/>
            <person name="Cortier E."/>
            <person name="Lapart J.A."/>
            <person name="Thomas J."/>
            <person name="Durand B."/>
        </authorList>
    </citation>
    <scope>FUNCTION</scope>
    <scope>IDENTIFICATION IN THE MKS COMPLEX</scope>
    <scope>SUBCELLULAR LOCATION</scope>
    <scope>TISSUE SPECIFICITY</scope>
</reference>
<reference evidence="9" key="7">
    <citation type="journal article" date="2016" name="J. Cell Sci.">
        <title>Drosophila sensory cilia lacking MKS proteins exhibit striking defects in development but only subtle defects in adults.</title>
        <authorList>
            <person name="Pratt M.B."/>
            <person name="Titlow J.S."/>
            <person name="Davis I."/>
            <person name="Barker A.R."/>
            <person name="Dawe H.R."/>
            <person name="Raff J.W."/>
            <person name="Roque H."/>
        </authorList>
    </citation>
    <scope>FUNCTION</scope>
    <scope>IDENTIFICATION IN THE MKS COMPLEX</scope>
    <scope>SUBCELLULAR LOCATION</scope>
    <scope>TISSUE SPECIFICITY</scope>
    <scope>DISRUPTION PHENOTYPE</scope>
</reference>
<reference evidence="9" key="8">
    <citation type="journal article" date="2018" name="Nat. Cell Biol.">
        <title>Differential regulation of transition zone and centriole proteins contributes to ciliary base diversity.</title>
        <authorList>
            <person name="Jana S.C."/>
            <person name="Mendonca S."/>
            <person name="Machado P."/>
            <person name="Werner S."/>
            <person name="Rocha J."/>
            <person name="Pereira A."/>
            <person name="Maiato H."/>
            <person name="Bettencourt-Dias M."/>
        </authorList>
    </citation>
    <scope>SUBCELLULAR LOCATION</scope>
    <scope>TISSUE SPECIFICITY</scope>
</reference>
<comment type="function">
    <text evidence="5 6">Probable component of the tectonic-like complex (also named MKS complex), a complex localized at the transition zone of primary cilia (PubMed:27577095, PubMed:27646273). Required for ciliary structure and function (PubMed:27577095).</text>
</comment>
<comment type="subunit">
    <text evidence="10 11">Probable component of the tectonic-like complex (also named MKS complex), composed of B9d1, B9d2, Cc2d2a, Mks1 and tctn.</text>
</comment>
<comment type="subcellular location">
    <subcellularLocation>
        <location evidence="3 4 5 6 7">Cytoplasm</location>
        <location evidence="3 4 5 6 7">Cytoskeleton</location>
        <location evidence="3 4 5 6 7">Cilium basal body</location>
    </subcellularLocation>
    <text evidence="4 5 6 7">Localizes at the transition zone (TZ), a region between the basal body and the ciliary axoneme in the olfactory, auditory and speromatocyte system (PubMed:27646273, PubMed:30013109). In spermatocytes, localizes in the transition zone and the migrating base of the spermatid ciliary cap (PubMed:25447994, PubMed:27577095). Co-localizes with the tectonic-like complex (PubMed:27646273).</text>
</comment>
<comment type="tissue specificity">
    <text evidence="3 4 5 6 7">Expressed in type I sensory neurons (at protein level) (PubMed:22508513, PubMed:30013109). Expressed in spermatids and spermatocytes (at protein level) (PubMed:25447994, PubMed:27577095, PubMed:27646273, PubMed:30013109).</text>
</comment>
<comment type="disruption phenotype">
    <text evidence="5">Viable and fertile (PubMed:27577095). Results in lack of localization of the tectonic-like module proteins, namely MKS1 and B9d2, to the transition zone resulting in minor defects in sensory cilia (PubMed:27577095).</text>
</comment>
<comment type="similarity">
    <text evidence="9">Belongs to the B9D family.</text>
</comment>
<dbReference type="EMBL" id="AE014297">
    <property type="protein sequence ID" value="AAF55201.1"/>
    <property type="molecule type" value="Genomic_DNA"/>
</dbReference>
<dbReference type="EMBL" id="BT032728">
    <property type="protein sequence ID" value="ACD81742.1"/>
    <property type="molecule type" value="mRNA"/>
</dbReference>
<dbReference type="RefSeq" id="NP_650470.1">
    <property type="nucleotide sequence ID" value="NM_142213.2"/>
</dbReference>
<dbReference type="ComplexPortal" id="CPX-2339">
    <property type="entry name" value="MKS complex"/>
</dbReference>
<dbReference type="FunCoup" id="Q9VF59">
    <property type="interactions" value="81"/>
</dbReference>
<dbReference type="IntAct" id="Q9VF59">
    <property type="interactions" value="3"/>
</dbReference>
<dbReference type="STRING" id="7227.FBpp0082599"/>
<dbReference type="PaxDb" id="7227-FBpp0082599"/>
<dbReference type="DNASU" id="41888"/>
<dbReference type="EnsemblMetazoa" id="FBtr0083145">
    <property type="protein sequence ID" value="FBpp0082599"/>
    <property type="gene ID" value="FBgn0038342"/>
</dbReference>
<dbReference type="GeneID" id="41888"/>
<dbReference type="KEGG" id="dme:Dmel_CG14870"/>
<dbReference type="UCSC" id="CG14870-RA">
    <property type="organism name" value="d. melanogaster"/>
</dbReference>
<dbReference type="AGR" id="FB:FBgn0038342"/>
<dbReference type="CTD" id="27077"/>
<dbReference type="FlyBase" id="FBgn0038342">
    <property type="gene designation" value="B9d1"/>
</dbReference>
<dbReference type="VEuPathDB" id="VectorBase:FBgn0038342"/>
<dbReference type="eggNOG" id="KOG4027">
    <property type="taxonomic scope" value="Eukaryota"/>
</dbReference>
<dbReference type="GeneTree" id="ENSGT00940000160079"/>
<dbReference type="HOGENOM" id="CLU_084934_0_0_1"/>
<dbReference type="InParanoid" id="Q9VF59"/>
<dbReference type="OMA" id="NMPIEVT"/>
<dbReference type="OrthoDB" id="431939at2759"/>
<dbReference type="PhylomeDB" id="Q9VF59"/>
<dbReference type="BioGRID-ORCS" id="41888">
    <property type="hits" value="0 hits in 1 CRISPR screen"/>
</dbReference>
<dbReference type="GenomeRNAi" id="41888"/>
<dbReference type="PRO" id="PR:Q9VF59"/>
<dbReference type="Proteomes" id="UP000000803">
    <property type="component" value="Chromosome 3R"/>
</dbReference>
<dbReference type="Bgee" id="FBgn0038342">
    <property type="expression patterns" value="Expressed in spermatocyte in testis and 21 other cell types or tissues"/>
</dbReference>
<dbReference type="GO" id="GO:0035869">
    <property type="term" value="C:ciliary transition zone"/>
    <property type="evidence" value="ECO:0000314"/>
    <property type="project" value="UniProtKB"/>
</dbReference>
<dbReference type="GO" id="GO:0005737">
    <property type="term" value="C:cytoplasm"/>
    <property type="evidence" value="ECO:0007669"/>
    <property type="project" value="UniProtKB-KW"/>
</dbReference>
<dbReference type="GO" id="GO:0005856">
    <property type="term" value="C:cytoskeleton"/>
    <property type="evidence" value="ECO:0007669"/>
    <property type="project" value="UniProtKB-KW"/>
</dbReference>
<dbReference type="GO" id="GO:0036038">
    <property type="term" value="C:MKS complex"/>
    <property type="evidence" value="ECO:0000250"/>
    <property type="project" value="FlyBase"/>
</dbReference>
<dbReference type="GO" id="GO:0060271">
    <property type="term" value="P:cilium assembly"/>
    <property type="evidence" value="ECO:0000270"/>
    <property type="project" value="FlyBase"/>
</dbReference>
<dbReference type="InterPro" id="IPR010796">
    <property type="entry name" value="C2_B9-type_dom"/>
</dbReference>
<dbReference type="PANTHER" id="PTHR12968">
    <property type="entry name" value="B9 DOMAIN-CONTAINING"/>
    <property type="match status" value="1"/>
</dbReference>
<dbReference type="PANTHER" id="PTHR12968:SF1">
    <property type="entry name" value="B9 DOMAIN-CONTAINING PROTEIN 1"/>
    <property type="match status" value="1"/>
</dbReference>
<dbReference type="Pfam" id="PF07162">
    <property type="entry name" value="B9-C2"/>
    <property type="match status" value="1"/>
</dbReference>
<dbReference type="PROSITE" id="PS51381">
    <property type="entry name" value="C2_B9"/>
    <property type="match status" value="1"/>
</dbReference>
<proteinExistence type="evidence at protein level"/>
<sequence>MSASEGISLPGNEETTPPHEKHKQKAKKAKKKSRSAKESVPNAMDAKATASYFSLSIVGQIVSATFPLGPDKEFVFLRYEMVAGPDWQLSSGPQHGLTQLATNRRGHFNEPIVFNMPIEVTYKSTSPYGWPQILVTVFGRSGLGRETLLGYAHIHLPVFGSRRPADQTEQLQAPILMPKCPNMMADITSWLLRREPELKDPKVLLDNLKCKGLSMESYGSLQFQLSSVMRGARKLGYHWHS</sequence>
<organism evidence="14">
    <name type="scientific">Drosophila melanogaster</name>
    <name type="common">Fruit fly</name>
    <dbReference type="NCBI Taxonomy" id="7227"/>
    <lineage>
        <taxon>Eukaryota</taxon>
        <taxon>Metazoa</taxon>
        <taxon>Ecdysozoa</taxon>
        <taxon>Arthropoda</taxon>
        <taxon>Hexapoda</taxon>
        <taxon>Insecta</taxon>
        <taxon>Pterygota</taxon>
        <taxon>Neoptera</taxon>
        <taxon>Endopterygota</taxon>
        <taxon>Diptera</taxon>
        <taxon>Brachycera</taxon>
        <taxon>Muscomorpha</taxon>
        <taxon>Ephydroidea</taxon>
        <taxon>Drosophilidae</taxon>
        <taxon>Drosophila</taxon>
        <taxon>Sophophora</taxon>
    </lineage>
</organism>